<organism>
    <name type="scientific">Streptococcus suis (strain 98HAH33)</name>
    <dbReference type="NCBI Taxonomy" id="391296"/>
    <lineage>
        <taxon>Bacteria</taxon>
        <taxon>Bacillati</taxon>
        <taxon>Bacillota</taxon>
        <taxon>Bacilli</taxon>
        <taxon>Lactobacillales</taxon>
        <taxon>Streptococcaceae</taxon>
        <taxon>Streptococcus</taxon>
    </lineage>
</organism>
<dbReference type="EC" id="2.1.1.228" evidence="1"/>
<dbReference type="EMBL" id="CP000408">
    <property type="protein sequence ID" value="ABP91978.1"/>
    <property type="molecule type" value="Genomic_DNA"/>
</dbReference>
<dbReference type="SMR" id="A4W0T9"/>
<dbReference type="KEGG" id="ssv:SSU98_0820"/>
<dbReference type="HOGENOM" id="CLU_047363_0_1_9"/>
<dbReference type="GO" id="GO:0005829">
    <property type="term" value="C:cytosol"/>
    <property type="evidence" value="ECO:0007669"/>
    <property type="project" value="TreeGrafter"/>
</dbReference>
<dbReference type="GO" id="GO:0052906">
    <property type="term" value="F:tRNA (guanine(37)-N1)-methyltransferase activity"/>
    <property type="evidence" value="ECO:0007669"/>
    <property type="project" value="UniProtKB-UniRule"/>
</dbReference>
<dbReference type="GO" id="GO:0002939">
    <property type="term" value="P:tRNA N1-guanine methylation"/>
    <property type="evidence" value="ECO:0007669"/>
    <property type="project" value="TreeGrafter"/>
</dbReference>
<dbReference type="CDD" id="cd18080">
    <property type="entry name" value="TrmD-like"/>
    <property type="match status" value="1"/>
</dbReference>
<dbReference type="FunFam" id="1.10.1270.20:FF:000001">
    <property type="entry name" value="tRNA (guanine-N(1)-)-methyltransferase"/>
    <property type="match status" value="1"/>
</dbReference>
<dbReference type="FunFam" id="3.40.1280.10:FF:000001">
    <property type="entry name" value="tRNA (guanine-N(1)-)-methyltransferase"/>
    <property type="match status" value="1"/>
</dbReference>
<dbReference type="Gene3D" id="3.40.1280.10">
    <property type="match status" value="1"/>
</dbReference>
<dbReference type="Gene3D" id="1.10.1270.20">
    <property type="entry name" value="tRNA(m1g37)methyltransferase, domain 2"/>
    <property type="match status" value="1"/>
</dbReference>
<dbReference type="HAMAP" id="MF_00605">
    <property type="entry name" value="TrmD"/>
    <property type="match status" value="1"/>
</dbReference>
<dbReference type="InterPro" id="IPR029028">
    <property type="entry name" value="Alpha/beta_knot_MTases"/>
</dbReference>
<dbReference type="InterPro" id="IPR023148">
    <property type="entry name" value="tRNA_m1G_MeTrfase_C_sf"/>
</dbReference>
<dbReference type="InterPro" id="IPR002649">
    <property type="entry name" value="tRNA_m1G_MeTrfase_TrmD"/>
</dbReference>
<dbReference type="InterPro" id="IPR029026">
    <property type="entry name" value="tRNA_m1G_MTases_N"/>
</dbReference>
<dbReference type="InterPro" id="IPR016009">
    <property type="entry name" value="tRNA_MeTrfase_TRMD/TRM10"/>
</dbReference>
<dbReference type="NCBIfam" id="NF000648">
    <property type="entry name" value="PRK00026.1"/>
    <property type="match status" value="1"/>
</dbReference>
<dbReference type="NCBIfam" id="TIGR00088">
    <property type="entry name" value="trmD"/>
    <property type="match status" value="1"/>
</dbReference>
<dbReference type="PANTHER" id="PTHR46417">
    <property type="entry name" value="TRNA (GUANINE-N(1)-)-METHYLTRANSFERASE"/>
    <property type="match status" value="1"/>
</dbReference>
<dbReference type="PANTHER" id="PTHR46417:SF1">
    <property type="entry name" value="TRNA (GUANINE-N(1)-)-METHYLTRANSFERASE"/>
    <property type="match status" value="1"/>
</dbReference>
<dbReference type="Pfam" id="PF01746">
    <property type="entry name" value="tRNA_m1G_MT"/>
    <property type="match status" value="1"/>
</dbReference>
<dbReference type="PIRSF" id="PIRSF000386">
    <property type="entry name" value="tRNA_mtase"/>
    <property type="match status" value="1"/>
</dbReference>
<dbReference type="SUPFAM" id="SSF75217">
    <property type="entry name" value="alpha/beta knot"/>
    <property type="match status" value="1"/>
</dbReference>
<name>TRMD_STRS2</name>
<gene>
    <name evidence="1" type="primary">trmD</name>
    <name type="ordered locus">SSU98_0820</name>
</gene>
<sequence length="241" mass="27709">MRIDILTLFPEMFAPLEHSIVGKARDKGLLEINYHNFRENAEKARHVDDEPYGGGQGMLLLAQPIFDTMDSIEQTKPRVILLDPAGRTFNQAYAEELAQEEQLIFICGHYEGYDERIKTLVTDEISLGDYVLTGGELAAMTMIDATVRLIPEVIGKEVSHTDDSFSSGLLEYPQYTRPYEYRGMVVPDVLMSGHHENIRKWRLEESLRKTYQRRPDLLENYNFTAEELTIFEKIKAEDTVD</sequence>
<keyword id="KW-0963">Cytoplasm</keyword>
<keyword id="KW-0489">Methyltransferase</keyword>
<keyword id="KW-0949">S-adenosyl-L-methionine</keyword>
<keyword id="KW-0808">Transferase</keyword>
<keyword id="KW-0819">tRNA processing</keyword>
<feature type="chain" id="PRO_1000006528" description="tRNA (guanine-N(1)-)-methyltransferase">
    <location>
        <begin position="1"/>
        <end position="241"/>
    </location>
</feature>
<feature type="binding site" evidence="1">
    <location>
        <position position="108"/>
    </location>
    <ligand>
        <name>S-adenosyl-L-methionine</name>
        <dbReference type="ChEBI" id="CHEBI:59789"/>
    </ligand>
</feature>
<feature type="binding site" evidence="1">
    <location>
        <begin position="127"/>
        <end position="132"/>
    </location>
    <ligand>
        <name>S-adenosyl-L-methionine</name>
        <dbReference type="ChEBI" id="CHEBI:59789"/>
    </ligand>
</feature>
<reference key="1">
    <citation type="journal article" date="2007" name="PLoS ONE">
        <title>A glimpse of streptococcal toxic shock syndrome from comparative genomics of S. suis 2 Chinese isolates.</title>
        <authorList>
            <person name="Chen C."/>
            <person name="Tang J."/>
            <person name="Dong W."/>
            <person name="Wang C."/>
            <person name="Feng Y."/>
            <person name="Wang J."/>
            <person name="Zheng F."/>
            <person name="Pan X."/>
            <person name="Liu D."/>
            <person name="Li M."/>
            <person name="Song Y."/>
            <person name="Zhu X."/>
            <person name="Sun H."/>
            <person name="Feng T."/>
            <person name="Guo Z."/>
            <person name="Ju A."/>
            <person name="Ge J."/>
            <person name="Dong Y."/>
            <person name="Sun W."/>
            <person name="Jiang Y."/>
            <person name="Wang J."/>
            <person name="Yan J."/>
            <person name="Yang H."/>
            <person name="Wang X."/>
            <person name="Gao G.F."/>
            <person name="Yang R."/>
            <person name="Wang J."/>
            <person name="Yu J."/>
        </authorList>
    </citation>
    <scope>NUCLEOTIDE SEQUENCE [LARGE SCALE GENOMIC DNA]</scope>
    <source>
        <strain>98HAH33</strain>
    </source>
</reference>
<proteinExistence type="inferred from homology"/>
<accession>A4W0T9</accession>
<evidence type="ECO:0000255" key="1">
    <source>
        <dbReference type="HAMAP-Rule" id="MF_00605"/>
    </source>
</evidence>
<comment type="function">
    <text evidence="1">Specifically methylates guanosine-37 in various tRNAs.</text>
</comment>
<comment type="catalytic activity">
    <reaction evidence="1">
        <text>guanosine(37) in tRNA + S-adenosyl-L-methionine = N(1)-methylguanosine(37) in tRNA + S-adenosyl-L-homocysteine + H(+)</text>
        <dbReference type="Rhea" id="RHEA:36899"/>
        <dbReference type="Rhea" id="RHEA-COMP:10145"/>
        <dbReference type="Rhea" id="RHEA-COMP:10147"/>
        <dbReference type="ChEBI" id="CHEBI:15378"/>
        <dbReference type="ChEBI" id="CHEBI:57856"/>
        <dbReference type="ChEBI" id="CHEBI:59789"/>
        <dbReference type="ChEBI" id="CHEBI:73542"/>
        <dbReference type="ChEBI" id="CHEBI:74269"/>
        <dbReference type="EC" id="2.1.1.228"/>
    </reaction>
</comment>
<comment type="subunit">
    <text evidence="1">Homodimer.</text>
</comment>
<comment type="subcellular location">
    <subcellularLocation>
        <location evidence="1">Cytoplasm</location>
    </subcellularLocation>
</comment>
<comment type="similarity">
    <text evidence="1">Belongs to the RNA methyltransferase TrmD family.</text>
</comment>
<protein>
    <recommendedName>
        <fullName evidence="1">tRNA (guanine-N(1)-)-methyltransferase</fullName>
        <ecNumber evidence="1">2.1.1.228</ecNumber>
    </recommendedName>
    <alternativeName>
        <fullName evidence="1">M1G-methyltransferase</fullName>
    </alternativeName>
    <alternativeName>
        <fullName evidence="1">tRNA [GM37] methyltransferase</fullName>
    </alternativeName>
</protein>